<evidence type="ECO:0000255" key="1">
    <source>
        <dbReference type="HAMAP-Rule" id="MF_00480"/>
    </source>
</evidence>
<evidence type="ECO:0000305" key="2"/>
<reference key="1">
    <citation type="journal article" date="2007" name="Genome Res.">
        <title>Reductive evolution and niche adaptation inferred from the genome of Mycobacterium ulcerans, the causative agent of Buruli ulcer.</title>
        <authorList>
            <person name="Stinear T.P."/>
            <person name="Seemann T."/>
            <person name="Pidot S."/>
            <person name="Frigui W."/>
            <person name="Reysset G."/>
            <person name="Garnier T."/>
            <person name="Meurice G."/>
            <person name="Simon D."/>
            <person name="Bouchier C."/>
            <person name="Ma L."/>
            <person name="Tichit M."/>
            <person name="Porter J.L."/>
            <person name="Ryan J."/>
            <person name="Johnson P.D.R."/>
            <person name="Davies J.K."/>
            <person name="Jenkin G.A."/>
            <person name="Small P.L.C."/>
            <person name="Jones L.M."/>
            <person name="Tekaia F."/>
            <person name="Laval F."/>
            <person name="Daffe M."/>
            <person name="Parkhill J."/>
            <person name="Cole S.T."/>
        </authorList>
    </citation>
    <scope>NUCLEOTIDE SEQUENCE [LARGE SCALE GENOMIC DNA]</scope>
    <source>
        <strain>Agy99</strain>
    </source>
</reference>
<proteinExistence type="inferred from homology"/>
<dbReference type="EMBL" id="CP000325">
    <property type="protein sequence ID" value="ABL03409.1"/>
    <property type="molecule type" value="Genomic_DNA"/>
</dbReference>
<dbReference type="RefSeq" id="WP_011739034.1">
    <property type="nucleotide sequence ID" value="NC_008611.1"/>
</dbReference>
<dbReference type="SMR" id="A0PM40"/>
<dbReference type="KEGG" id="mul:MUL_0764"/>
<dbReference type="eggNOG" id="COG0049">
    <property type="taxonomic scope" value="Bacteria"/>
</dbReference>
<dbReference type="HOGENOM" id="CLU_072226_1_1_11"/>
<dbReference type="Proteomes" id="UP000000765">
    <property type="component" value="Chromosome"/>
</dbReference>
<dbReference type="GO" id="GO:0015935">
    <property type="term" value="C:small ribosomal subunit"/>
    <property type="evidence" value="ECO:0007669"/>
    <property type="project" value="InterPro"/>
</dbReference>
<dbReference type="GO" id="GO:0019843">
    <property type="term" value="F:rRNA binding"/>
    <property type="evidence" value="ECO:0007669"/>
    <property type="project" value="UniProtKB-UniRule"/>
</dbReference>
<dbReference type="GO" id="GO:0003735">
    <property type="term" value="F:structural constituent of ribosome"/>
    <property type="evidence" value="ECO:0007669"/>
    <property type="project" value="InterPro"/>
</dbReference>
<dbReference type="GO" id="GO:0000049">
    <property type="term" value="F:tRNA binding"/>
    <property type="evidence" value="ECO:0007669"/>
    <property type="project" value="UniProtKB-UniRule"/>
</dbReference>
<dbReference type="GO" id="GO:0006412">
    <property type="term" value="P:translation"/>
    <property type="evidence" value="ECO:0007669"/>
    <property type="project" value="UniProtKB-UniRule"/>
</dbReference>
<dbReference type="CDD" id="cd14869">
    <property type="entry name" value="uS7_Bacteria"/>
    <property type="match status" value="1"/>
</dbReference>
<dbReference type="FunFam" id="1.10.455.10:FF:000001">
    <property type="entry name" value="30S ribosomal protein S7"/>
    <property type="match status" value="1"/>
</dbReference>
<dbReference type="Gene3D" id="1.10.455.10">
    <property type="entry name" value="Ribosomal protein S7 domain"/>
    <property type="match status" value="1"/>
</dbReference>
<dbReference type="HAMAP" id="MF_00480_B">
    <property type="entry name" value="Ribosomal_uS7_B"/>
    <property type="match status" value="1"/>
</dbReference>
<dbReference type="InterPro" id="IPR000235">
    <property type="entry name" value="Ribosomal_uS7"/>
</dbReference>
<dbReference type="InterPro" id="IPR005717">
    <property type="entry name" value="Ribosomal_uS7_bac/org-type"/>
</dbReference>
<dbReference type="InterPro" id="IPR020606">
    <property type="entry name" value="Ribosomal_uS7_CS"/>
</dbReference>
<dbReference type="InterPro" id="IPR023798">
    <property type="entry name" value="Ribosomal_uS7_dom"/>
</dbReference>
<dbReference type="InterPro" id="IPR036823">
    <property type="entry name" value="Ribosomal_uS7_dom_sf"/>
</dbReference>
<dbReference type="NCBIfam" id="TIGR01029">
    <property type="entry name" value="rpsG_bact"/>
    <property type="match status" value="1"/>
</dbReference>
<dbReference type="PANTHER" id="PTHR11205">
    <property type="entry name" value="RIBOSOMAL PROTEIN S7"/>
    <property type="match status" value="1"/>
</dbReference>
<dbReference type="Pfam" id="PF00177">
    <property type="entry name" value="Ribosomal_S7"/>
    <property type="match status" value="1"/>
</dbReference>
<dbReference type="PIRSF" id="PIRSF002122">
    <property type="entry name" value="RPS7p_RPS7a_RPS5e_RPS7o"/>
    <property type="match status" value="1"/>
</dbReference>
<dbReference type="SUPFAM" id="SSF47973">
    <property type="entry name" value="Ribosomal protein S7"/>
    <property type="match status" value="1"/>
</dbReference>
<dbReference type="PROSITE" id="PS00052">
    <property type="entry name" value="RIBOSOMAL_S7"/>
    <property type="match status" value="1"/>
</dbReference>
<keyword id="KW-0687">Ribonucleoprotein</keyword>
<keyword id="KW-0689">Ribosomal protein</keyword>
<keyword id="KW-0694">RNA-binding</keyword>
<keyword id="KW-0699">rRNA-binding</keyword>
<keyword id="KW-0820">tRNA-binding</keyword>
<comment type="function">
    <text evidence="1">One of the primary rRNA binding proteins, it binds directly to 16S rRNA where it nucleates assembly of the head domain of the 30S subunit. Is located at the subunit interface close to the decoding center, probably blocks exit of the E-site tRNA.</text>
</comment>
<comment type="subunit">
    <text evidence="1">Part of the 30S ribosomal subunit. Contacts proteins S9 and S11.</text>
</comment>
<comment type="similarity">
    <text evidence="1">Belongs to the universal ribosomal protein uS7 family.</text>
</comment>
<feature type="chain" id="PRO_1000014239" description="Small ribosomal subunit protein uS7">
    <location>
        <begin position="1"/>
        <end position="156"/>
    </location>
</feature>
<sequence length="156" mass="17614">MPRKGPAPKRPLVNDPVYGSQLVTQLVNKVLLQGKKSLAERIVYGALEQARDNTGTDPVITLKRALDNVKPVLEVRSRRVGGATYQVPVEVRPDRSTTLALRWLVGYSRQRREKTMIERLANEILDASNGLGASVKRREDTHKMAEANRAFAHYRW</sequence>
<accession>A0PM40</accession>
<gene>
    <name evidence="1" type="primary">rpsG</name>
    <name type="ordered locus">MUL_0764</name>
</gene>
<organism>
    <name type="scientific">Mycobacterium ulcerans (strain Agy99)</name>
    <dbReference type="NCBI Taxonomy" id="362242"/>
    <lineage>
        <taxon>Bacteria</taxon>
        <taxon>Bacillati</taxon>
        <taxon>Actinomycetota</taxon>
        <taxon>Actinomycetes</taxon>
        <taxon>Mycobacteriales</taxon>
        <taxon>Mycobacteriaceae</taxon>
        <taxon>Mycobacterium</taxon>
        <taxon>Mycobacterium ulcerans group</taxon>
    </lineage>
</organism>
<name>RS7_MYCUA</name>
<protein>
    <recommendedName>
        <fullName evidence="1">Small ribosomal subunit protein uS7</fullName>
    </recommendedName>
    <alternativeName>
        <fullName evidence="2">30S ribosomal protein S7</fullName>
    </alternativeName>
</protein>